<comment type="function">
    <text evidence="1">May be involved in the transport of PQQ or its precursor to the periplasm.</text>
</comment>
<comment type="pathway">
    <text evidence="1">Cofactor biosynthesis; pyrroloquinoline quinone biosynthesis.</text>
</comment>
<comment type="similarity">
    <text evidence="1">Belongs to the PqqB family.</text>
</comment>
<reference key="1">
    <citation type="journal article" date="2003" name="Proc. Natl. Acad. Sci. U.S.A.">
        <title>The complete genome sequence of the Arabidopsis and tomato pathogen Pseudomonas syringae pv. tomato DC3000.</title>
        <authorList>
            <person name="Buell C.R."/>
            <person name="Joardar V."/>
            <person name="Lindeberg M."/>
            <person name="Selengut J."/>
            <person name="Paulsen I.T."/>
            <person name="Gwinn M.L."/>
            <person name="Dodson R.J."/>
            <person name="DeBoy R.T."/>
            <person name="Durkin A.S."/>
            <person name="Kolonay J.F."/>
            <person name="Madupu R."/>
            <person name="Daugherty S.C."/>
            <person name="Brinkac L.M."/>
            <person name="Beanan M.J."/>
            <person name="Haft D.H."/>
            <person name="Nelson W.C."/>
            <person name="Davidsen T.M."/>
            <person name="Zafar N."/>
            <person name="Zhou L."/>
            <person name="Liu J."/>
            <person name="Yuan Q."/>
            <person name="Khouri H.M."/>
            <person name="Fedorova N.B."/>
            <person name="Tran B."/>
            <person name="Russell D."/>
            <person name="Berry K.J."/>
            <person name="Utterback T.R."/>
            <person name="Van Aken S.E."/>
            <person name="Feldblyum T.V."/>
            <person name="D'Ascenzo M."/>
            <person name="Deng W.-L."/>
            <person name="Ramos A.R."/>
            <person name="Alfano J.R."/>
            <person name="Cartinhour S."/>
            <person name="Chatterjee A.K."/>
            <person name="Delaney T.P."/>
            <person name="Lazarowitz S.G."/>
            <person name="Martin G.B."/>
            <person name="Schneider D.J."/>
            <person name="Tang X."/>
            <person name="Bender C.L."/>
            <person name="White O."/>
            <person name="Fraser C.M."/>
            <person name="Collmer A."/>
        </authorList>
    </citation>
    <scope>NUCLEOTIDE SEQUENCE [LARGE SCALE GENOMIC DNA]</scope>
    <source>
        <strain>ATCC BAA-871 / DC3000</strain>
    </source>
</reference>
<sequence length="303" mass="33327">MYIQILGSAAGGGFPQWNCNCVNCAGFRDGSLRAQARTQSSIALSDDGVNWVLCNASPDIRAQLQGFAPMQPGRALRDTGISAIVLMDSQIDHTTGLLSLREGCPHQVWCTDMVHEDLSTGFPLFEMLKHWNGGLNWNRIELQGSFVIPACPNLRFTPFPLRSAAPPYSPHRFDPHPGDNIGLLVEDTRTGGKLFYAPGLGKVDEALAEKMRDADCLLVDGTMWDDDEMQRRGVGTRTGREMGHLAQNGPGGMLDVLEGFPEQRKVLIHINNTNPILDEDSPERAELVRRNVEVAFDGMSIEL</sequence>
<gene>
    <name evidence="1" type="primary">pqqB</name>
    <name type="ordered locus">PSPTO_0512</name>
</gene>
<protein>
    <recommendedName>
        <fullName evidence="1">Coenzyme PQQ synthesis protein B</fullName>
    </recommendedName>
    <alternativeName>
        <fullName evidence="1">Pyrroloquinoline quinone biosynthesis protein B</fullName>
    </alternativeName>
</protein>
<keyword id="KW-0884">PQQ biosynthesis</keyword>
<keyword id="KW-1185">Reference proteome</keyword>
<keyword id="KW-0813">Transport</keyword>
<proteinExistence type="inferred from homology"/>
<evidence type="ECO:0000255" key="1">
    <source>
        <dbReference type="HAMAP-Rule" id="MF_00653"/>
    </source>
</evidence>
<dbReference type="EMBL" id="AE016853">
    <property type="protein sequence ID" value="AAO54055.1"/>
    <property type="molecule type" value="Genomic_DNA"/>
</dbReference>
<dbReference type="RefSeq" id="NP_790360.1">
    <property type="nucleotide sequence ID" value="NC_004578.1"/>
</dbReference>
<dbReference type="RefSeq" id="WP_005763801.1">
    <property type="nucleotide sequence ID" value="NC_004578.1"/>
</dbReference>
<dbReference type="SMR" id="Q88A81"/>
<dbReference type="STRING" id="223283.PSPTO_0512"/>
<dbReference type="GeneID" id="1182121"/>
<dbReference type="KEGG" id="pst:PSPTO_0512"/>
<dbReference type="PATRIC" id="fig|223283.9.peg.527"/>
<dbReference type="eggNOG" id="COG1235">
    <property type="taxonomic scope" value="Bacteria"/>
</dbReference>
<dbReference type="HOGENOM" id="CLU_061120_0_0_6"/>
<dbReference type="OrthoDB" id="9778305at2"/>
<dbReference type="PhylomeDB" id="Q88A81"/>
<dbReference type="UniPathway" id="UPA00539"/>
<dbReference type="Proteomes" id="UP000002515">
    <property type="component" value="Chromosome"/>
</dbReference>
<dbReference type="GO" id="GO:0018189">
    <property type="term" value="P:pyrroloquinoline quinone biosynthetic process"/>
    <property type="evidence" value="ECO:0007669"/>
    <property type="project" value="UniProtKB-UniRule"/>
</dbReference>
<dbReference type="CDD" id="cd16274">
    <property type="entry name" value="PQQB-like_MBL-fold"/>
    <property type="match status" value="1"/>
</dbReference>
<dbReference type="Gene3D" id="3.60.15.10">
    <property type="entry name" value="Ribonuclease Z/Hydroxyacylglutathione hydrolase-like"/>
    <property type="match status" value="1"/>
</dbReference>
<dbReference type="HAMAP" id="MF_00653">
    <property type="entry name" value="PQQ_syn_PqqB"/>
    <property type="match status" value="1"/>
</dbReference>
<dbReference type="InterPro" id="IPR001279">
    <property type="entry name" value="Metallo-B-lactamas"/>
</dbReference>
<dbReference type="InterPro" id="IPR011842">
    <property type="entry name" value="PQQ_synth_PqqB"/>
</dbReference>
<dbReference type="InterPro" id="IPR036866">
    <property type="entry name" value="RibonucZ/Hydroxyglut_hydro"/>
</dbReference>
<dbReference type="NCBIfam" id="TIGR02108">
    <property type="entry name" value="PQQ_syn_pqqB"/>
    <property type="match status" value="1"/>
</dbReference>
<dbReference type="PANTHER" id="PTHR42663:SF7">
    <property type="entry name" value="COENZYME PQQ SYNTHESIS PROTEIN B"/>
    <property type="match status" value="1"/>
</dbReference>
<dbReference type="PANTHER" id="PTHR42663">
    <property type="entry name" value="HYDROLASE C777.06C-RELATED-RELATED"/>
    <property type="match status" value="1"/>
</dbReference>
<dbReference type="Pfam" id="PF12706">
    <property type="entry name" value="Lactamase_B_2"/>
    <property type="match status" value="1"/>
</dbReference>
<dbReference type="SUPFAM" id="SSF56281">
    <property type="entry name" value="Metallo-hydrolase/oxidoreductase"/>
    <property type="match status" value="1"/>
</dbReference>
<name>PQQB_PSESM</name>
<organism>
    <name type="scientific">Pseudomonas syringae pv. tomato (strain ATCC BAA-871 / DC3000)</name>
    <dbReference type="NCBI Taxonomy" id="223283"/>
    <lineage>
        <taxon>Bacteria</taxon>
        <taxon>Pseudomonadati</taxon>
        <taxon>Pseudomonadota</taxon>
        <taxon>Gammaproteobacteria</taxon>
        <taxon>Pseudomonadales</taxon>
        <taxon>Pseudomonadaceae</taxon>
        <taxon>Pseudomonas</taxon>
    </lineage>
</organism>
<feature type="chain" id="PRO_0000220006" description="Coenzyme PQQ synthesis protein B">
    <location>
        <begin position="1"/>
        <end position="303"/>
    </location>
</feature>
<accession>Q88A81</accession>